<accession>Q82M93</accession>
<evidence type="ECO:0000255" key="1">
    <source>
        <dbReference type="HAMAP-Rule" id="MF_00493"/>
    </source>
</evidence>
<reference key="1">
    <citation type="journal article" date="2001" name="Proc. Natl. Acad. Sci. U.S.A.">
        <title>Genome sequence of an industrial microorganism Streptomyces avermitilis: deducing the ability of producing secondary metabolites.</title>
        <authorList>
            <person name="Omura S."/>
            <person name="Ikeda H."/>
            <person name="Ishikawa J."/>
            <person name="Hanamoto A."/>
            <person name="Takahashi C."/>
            <person name="Shinose M."/>
            <person name="Takahashi Y."/>
            <person name="Horikawa H."/>
            <person name="Nakazawa H."/>
            <person name="Osonoe T."/>
            <person name="Kikuchi H."/>
            <person name="Shiba T."/>
            <person name="Sakaki Y."/>
            <person name="Hattori M."/>
        </authorList>
    </citation>
    <scope>NUCLEOTIDE SEQUENCE [LARGE SCALE GENOMIC DNA]</scope>
    <source>
        <strain>ATCC 31267 / DSM 46492 / JCM 5070 / NBRC 14893 / NCIMB 12804 / NRRL 8165 / MA-4680</strain>
    </source>
</reference>
<reference key="2">
    <citation type="journal article" date="2003" name="Nat. Biotechnol.">
        <title>Complete genome sequence and comparative analysis of the industrial microorganism Streptomyces avermitilis.</title>
        <authorList>
            <person name="Ikeda H."/>
            <person name="Ishikawa J."/>
            <person name="Hanamoto A."/>
            <person name="Shinose M."/>
            <person name="Kikuchi H."/>
            <person name="Shiba T."/>
            <person name="Sakaki Y."/>
            <person name="Hattori M."/>
            <person name="Omura S."/>
        </authorList>
    </citation>
    <scope>NUCLEOTIDE SEQUENCE [LARGE SCALE GENOMIC DNA]</scope>
    <source>
        <strain>ATCC 31267 / DSM 46492 / JCM 5070 / NBRC 14893 / NCIMB 12804 / NRRL 8165 / MA-4680</strain>
    </source>
</reference>
<keyword id="KW-0963">Cytoplasm</keyword>
<keyword id="KW-0570">Pentose shunt</keyword>
<keyword id="KW-1185">Reference proteome</keyword>
<keyword id="KW-0704">Schiff base</keyword>
<keyword id="KW-0808">Transferase</keyword>
<organism>
    <name type="scientific">Streptomyces avermitilis (strain ATCC 31267 / DSM 46492 / JCM 5070 / NBRC 14893 / NCIMB 12804 / NRRL 8165 / MA-4680)</name>
    <dbReference type="NCBI Taxonomy" id="227882"/>
    <lineage>
        <taxon>Bacteria</taxon>
        <taxon>Bacillati</taxon>
        <taxon>Actinomycetota</taxon>
        <taxon>Actinomycetes</taxon>
        <taxon>Kitasatosporales</taxon>
        <taxon>Streptomycetaceae</taxon>
        <taxon>Streptomyces</taxon>
    </lineage>
</organism>
<sequence>MITVSNTVENLERLSDEGVSIWLDDLSRKRITSGNLAELIAHKHVVGVTTNPSIFQAAIGSGEGYEEQLADLAVRGVTVDEAVRMMTTADVRAAADILRPVYDATGGRDGRVSIEVDPRLAHDTEATIAEAKQLAWLVDRPNVMIKIPATKAGLPAITEVIGLGISVNVTLIFSLERYREVMDAYLAGLERAQAAGIDLAGIHSVASFFVSRVDSEIDKRLAKAGTDDAQALKGKAALANARLAYEAYEEVFAGERWTALAPAGAHKQRPLWASTGVKDPAYKDTLYVDELVAPGTVNTMPEGTLNATADHGDIHGDTVTGGYAQARADLAAVERLGISYDEVVKQLEDEAVAKFEVAWGDLLEAVATSLRGKGADGE</sequence>
<dbReference type="EC" id="2.2.1.2" evidence="1"/>
<dbReference type="EMBL" id="BA000030">
    <property type="protein sequence ID" value="BAC69478.1"/>
    <property type="molecule type" value="Genomic_DNA"/>
</dbReference>
<dbReference type="SMR" id="Q82M93"/>
<dbReference type="GeneID" id="41538868"/>
<dbReference type="KEGG" id="sma:SAVERM_1767"/>
<dbReference type="eggNOG" id="COG0176">
    <property type="taxonomic scope" value="Bacteria"/>
</dbReference>
<dbReference type="HOGENOM" id="CLU_050771_1_0_11"/>
<dbReference type="OrthoDB" id="9809101at2"/>
<dbReference type="UniPathway" id="UPA00115">
    <property type="reaction ID" value="UER00414"/>
</dbReference>
<dbReference type="Proteomes" id="UP000000428">
    <property type="component" value="Chromosome"/>
</dbReference>
<dbReference type="GO" id="GO:0005737">
    <property type="term" value="C:cytoplasm"/>
    <property type="evidence" value="ECO:0007669"/>
    <property type="project" value="UniProtKB-SubCell"/>
</dbReference>
<dbReference type="GO" id="GO:0004801">
    <property type="term" value="F:transaldolase activity"/>
    <property type="evidence" value="ECO:0007669"/>
    <property type="project" value="UniProtKB-UniRule"/>
</dbReference>
<dbReference type="GO" id="GO:0005975">
    <property type="term" value="P:carbohydrate metabolic process"/>
    <property type="evidence" value="ECO:0007669"/>
    <property type="project" value="InterPro"/>
</dbReference>
<dbReference type="GO" id="GO:0006098">
    <property type="term" value="P:pentose-phosphate shunt"/>
    <property type="evidence" value="ECO:0007669"/>
    <property type="project" value="UniProtKB-UniRule"/>
</dbReference>
<dbReference type="CDD" id="cd00955">
    <property type="entry name" value="Transaldolase_like"/>
    <property type="match status" value="1"/>
</dbReference>
<dbReference type="Gene3D" id="3.20.20.70">
    <property type="entry name" value="Aldolase class I"/>
    <property type="match status" value="1"/>
</dbReference>
<dbReference type="HAMAP" id="MF_00493">
    <property type="entry name" value="Transaldolase_2"/>
    <property type="match status" value="1"/>
</dbReference>
<dbReference type="InterPro" id="IPR013785">
    <property type="entry name" value="Aldolase_TIM"/>
</dbReference>
<dbReference type="InterPro" id="IPR001585">
    <property type="entry name" value="TAL/FSA"/>
</dbReference>
<dbReference type="InterPro" id="IPR004732">
    <property type="entry name" value="Transaldolase_2"/>
</dbReference>
<dbReference type="InterPro" id="IPR018225">
    <property type="entry name" value="Transaldolase_AS"/>
</dbReference>
<dbReference type="NCBIfam" id="NF002881">
    <property type="entry name" value="PRK03343.1"/>
    <property type="match status" value="1"/>
</dbReference>
<dbReference type="NCBIfam" id="TIGR00876">
    <property type="entry name" value="tal_mycobact"/>
    <property type="match status" value="1"/>
</dbReference>
<dbReference type="PANTHER" id="PTHR10683">
    <property type="entry name" value="TRANSALDOLASE"/>
    <property type="match status" value="1"/>
</dbReference>
<dbReference type="PANTHER" id="PTHR10683:SF31">
    <property type="entry name" value="TRANSALDOLASE"/>
    <property type="match status" value="1"/>
</dbReference>
<dbReference type="Pfam" id="PF00923">
    <property type="entry name" value="TAL_FSA"/>
    <property type="match status" value="1"/>
</dbReference>
<dbReference type="PIRSF" id="PIRSF036915">
    <property type="entry name" value="Trnald_Bac_Plnt"/>
    <property type="match status" value="1"/>
</dbReference>
<dbReference type="SUPFAM" id="SSF51569">
    <property type="entry name" value="Aldolase"/>
    <property type="match status" value="1"/>
</dbReference>
<dbReference type="PROSITE" id="PS01054">
    <property type="entry name" value="TRANSALDOLASE_1"/>
    <property type="match status" value="1"/>
</dbReference>
<dbReference type="PROSITE" id="PS00958">
    <property type="entry name" value="TRANSALDOLASE_2"/>
    <property type="match status" value="1"/>
</dbReference>
<feature type="chain" id="PRO_0000173639" description="Transaldolase 1">
    <location>
        <begin position="1"/>
        <end position="378"/>
    </location>
</feature>
<feature type="active site" description="Schiff-base intermediate with substrate" evidence="1">
    <location>
        <position position="146"/>
    </location>
</feature>
<gene>
    <name evidence="1" type="primary">tal1</name>
    <name type="ordered locus">SAV_1767</name>
</gene>
<proteinExistence type="inferred from homology"/>
<protein>
    <recommendedName>
        <fullName evidence="1">Transaldolase 1</fullName>
        <ecNumber evidence="1">2.2.1.2</ecNumber>
    </recommendedName>
</protein>
<comment type="function">
    <text evidence="1">Transaldolase is important for the balance of metabolites in the pentose-phosphate pathway.</text>
</comment>
<comment type="catalytic activity">
    <reaction evidence="1">
        <text>D-sedoheptulose 7-phosphate + D-glyceraldehyde 3-phosphate = D-erythrose 4-phosphate + beta-D-fructose 6-phosphate</text>
        <dbReference type="Rhea" id="RHEA:17053"/>
        <dbReference type="ChEBI" id="CHEBI:16897"/>
        <dbReference type="ChEBI" id="CHEBI:57483"/>
        <dbReference type="ChEBI" id="CHEBI:57634"/>
        <dbReference type="ChEBI" id="CHEBI:59776"/>
        <dbReference type="EC" id="2.2.1.2"/>
    </reaction>
</comment>
<comment type="pathway">
    <text evidence="1">Carbohydrate degradation; pentose phosphate pathway; D-glyceraldehyde 3-phosphate and beta-D-fructose 6-phosphate from D-ribose 5-phosphate and D-xylulose 5-phosphate (non-oxidative stage): step 2/3.</text>
</comment>
<comment type="subcellular location">
    <subcellularLocation>
        <location evidence="1">Cytoplasm</location>
    </subcellularLocation>
</comment>
<comment type="similarity">
    <text evidence="1">Belongs to the transaldolase family. Type 2 subfamily.</text>
</comment>
<name>TAL1_STRAW</name>